<feature type="chain" id="PRO_0000302625" description="ATP synthase subunit alpha">
    <location>
        <begin position="1"/>
        <end position="512"/>
    </location>
</feature>
<feature type="binding site" evidence="1">
    <location>
        <begin position="169"/>
        <end position="176"/>
    </location>
    <ligand>
        <name>ATP</name>
        <dbReference type="ChEBI" id="CHEBI:30616"/>
    </ligand>
</feature>
<feature type="site" description="Required for activity" evidence="1">
    <location>
        <position position="373"/>
    </location>
</feature>
<organism>
    <name type="scientific">Azoarcus sp. (strain BH72)</name>
    <dbReference type="NCBI Taxonomy" id="418699"/>
    <lineage>
        <taxon>Bacteria</taxon>
        <taxon>Pseudomonadati</taxon>
        <taxon>Pseudomonadota</taxon>
        <taxon>Betaproteobacteria</taxon>
        <taxon>Rhodocyclales</taxon>
        <taxon>Zoogloeaceae</taxon>
        <taxon>Azoarcus</taxon>
    </lineage>
</organism>
<name>ATPA_AZOSB</name>
<sequence length="512" mass="55288">MQLNPSEISDLIKSRIQNLQLAATSRNEGTVVSVTDGITRIHGLTDVMQGEMLEFPGNTFGLALNLERDSVGAVVLGEYEHITEGDTVKATGRILEVPVGPELIGRVVNALGQPIDGKGPINAKLTDKIEKVAPGVIARQSVSQPVQTGLKSVDSMVPIGRGQRELIIGDRQTGKTAVAVDAIINQKGQNMFCVYVAIGQKASTIANVVRKLEENGAMEYTIVVAATASESAAMQYLSAYAGCTMGEYFRDRGQDALIVYDDLTKQAWAYRQVSLLLRRPPGREAYPGDVFYLHSRLLERAARVNADYVEKFTNGEVKGKTGSLTALPVIETQAGDVSAFVPTNVISITDGQIFLETDLFNAGIRPAINAGISVSRVGGAAQTKVVKKLSGGIRTDLAQYRELAAFAQFASDLDDATRKQLERGRRVTELMKQPQYAPLSVAEMAITLYAVNNGYFDDVEVARVLAFESGLQQFVKAKAPELVAKITDTKELDADGEKTLVAAIAEFKKSWA</sequence>
<gene>
    <name evidence="1" type="primary">atpA</name>
    <name type="ordered locus">azo0157</name>
</gene>
<comment type="function">
    <text evidence="1">Produces ATP from ADP in the presence of a proton gradient across the membrane. The alpha chain is a regulatory subunit.</text>
</comment>
<comment type="catalytic activity">
    <reaction evidence="1">
        <text>ATP + H2O + 4 H(+)(in) = ADP + phosphate + 5 H(+)(out)</text>
        <dbReference type="Rhea" id="RHEA:57720"/>
        <dbReference type="ChEBI" id="CHEBI:15377"/>
        <dbReference type="ChEBI" id="CHEBI:15378"/>
        <dbReference type="ChEBI" id="CHEBI:30616"/>
        <dbReference type="ChEBI" id="CHEBI:43474"/>
        <dbReference type="ChEBI" id="CHEBI:456216"/>
        <dbReference type="EC" id="7.1.2.2"/>
    </reaction>
</comment>
<comment type="subunit">
    <text evidence="1">F-type ATPases have 2 components, CF(1) - the catalytic core - and CF(0) - the membrane proton channel. CF(1) has five subunits: alpha(3), beta(3), gamma(1), delta(1), epsilon(1). CF(0) has three main subunits: a(1), b(2) and c(9-12). The alpha and beta chains form an alternating ring which encloses part of the gamma chain. CF(1) is attached to CF(0) by a central stalk formed by the gamma and epsilon chains, while a peripheral stalk is formed by the delta and b chains.</text>
</comment>
<comment type="subcellular location">
    <subcellularLocation>
        <location evidence="1">Cell inner membrane</location>
        <topology evidence="1">Peripheral membrane protein</topology>
    </subcellularLocation>
</comment>
<comment type="similarity">
    <text evidence="1">Belongs to the ATPase alpha/beta chains family.</text>
</comment>
<keyword id="KW-0066">ATP synthesis</keyword>
<keyword id="KW-0067">ATP-binding</keyword>
<keyword id="KW-0997">Cell inner membrane</keyword>
<keyword id="KW-1003">Cell membrane</keyword>
<keyword id="KW-0139">CF(1)</keyword>
<keyword id="KW-0375">Hydrogen ion transport</keyword>
<keyword id="KW-0406">Ion transport</keyword>
<keyword id="KW-0472">Membrane</keyword>
<keyword id="KW-0547">Nucleotide-binding</keyword>
<keyword id="KW-1185">Reference proteome</keyword>
<keyword id="KW-1278">Translocase</keyword>
<keyword id="KW-0813">Transport</keyword>
<evidence type="ECO:0000255" key="1">
    <source>
        <dbReference type="HAMAP-Rule" id="MF_01346"/>
    </source>
</evidence>
<protein>
    <recommendedName>
        <fullName evidence="1">ATP synthase subunit alpha</fullName>
        <ecNumber evidence="1">7.1.2.2</ecNumber>
    </recommendedName>
    <alternativeName>
        <fullName evidence="1">ATP synthase F1 sector subunit alpha</fullName>
    </alternativeName>
    <alternativeName>
        <fullName evidence="1">F-ATPase subunit alpha</fullName>
    </alternativeName>
</protein>
<dbReference type="EC" id="7.1.2.2" evidence="1"/>
<dbReference type="EMBL" id="AM406670">
    <property type="protein sequence ID" value="CAL92775.1"/>
    <property type="molecule type" value="Genomic_DNA"/>
</dbReference>
<dbReference type="RefSeq" id="WP_011763893.1">
    <property type="nucleotide sequence ID" value="NC_008702.1"/>
</dbReference>
<dbReference type="SMR" id="A1K1S0"/>
<dbReference type="STRING" id="62928.azo0157"/>
<dbReference type="KEGG" id="aoa:dqs_0166"/>
<dbReference type="KEGG" id="azo:azo0157"/>
<dbReference type="eggNOG" id="COG0056">
    <property type="taxonomic scope" value="Bacteria"/>
</dbReference>
<dbReference type="HOGENOM" id="CLU_010091_2_1_4"/>
<dbReference type="OrthoDB" id="9803053at2"/>
<dbReference type="Proteomes" id="UP000002588">
    <property type="component" value="Chromosome"/>
</dbReference>
<dbReference type="GO" id="GO:0005886">
    <property type="term" value="C:plasma membrane"/>
    <property type="evidence" value="ECO:0007669"/>
    <property type="project" value="UniProtKB-SubCell"/>
</dbReference>
<dbReference type="GO" id="GO:0045259">
    <property type="term" value="C:proton-transporting ATP synthase complex"/>
    <property type="evidence" value="ECO:0007669"/>
    <property type="project" value="UniProtKB-KW"/>
</dbReference>
<dbReference type="GO" id="GO:0043531">
    <property type="term" value="F:ADP binding"/>
    <property type="evidence" value="ECO:0007669"/>
    <property type="project" value="TreeGrafter"/>
</dbReference>
<dbReference type="GO" id="GO:0005524">
    <property type="term" value="F:ATP binding"/>
    <property type="evidence" value="ECO:0007669"/>
    <property type="project" value="UniProtKB-UniRule"/>
</dbReference>
<dbReference type="GO" id="GO:0046933">
    <property type="term" value="F:proton-transporting ATP synthase activity, rotational mechanism"/>
    <property type="evidence" value="ECO:0007669"/>
    <property type="project" value="UniProtKB-UniRule"/>
</dbReference>
<dbReference type="CDD" id="cd18113">
    <property type="entry name" value="ATP-synt_F1_alpha_C"/>
    <property type="match status" value="1"/>
</dbReference>
<dbReference type="CDD" id="cd18116">
    <property type="entry name" value="ATP-synt_F1_alpha_N"/>
    <property type="match status" value="1"/>
</dbReference>
<dbReference type="CDD" id="cd01132">
    <property type="entry name" value="F1-ATPase_alpha_CD"/>
    <property type="match status" value="1"/>
</dbReference>
<dbReference type="FunFam" id="1.20.150.20:FF:000001">
    <property type="entry name" value="ATP synthase subunit alpha"/>
    <property type="match status" value="1"/>
</dbReference>
<dbReference type="FunFam" id="2.40.30.20:FF:000001">
    <property type="entry name" value="ATP synthase subunit alpha"/>
    <property type="match status" value="1"/>
</dbReference>
<dbReference type="FunFam" id="3.40.50.300:FF:000002">
    <property type="entry name" value="ATP synthase subunit alpha"/>
    <property type="match status" value="1"/>
</dbReference>
<dbReference type="Gene3D" id="2.40.30.20">
    <property type="match status" value="1"/>
</dbReference>
<dbReference type="Gene3D" id="1.20.150.20">
    <property type="entry name" value="ATP synthase alpha/beta chain, C-terminal domain"/>
    <property type="match status" value="1"/>
</dbReference>
<dbReference type="Gene3D" id="3.40.50.300">
    <property type="entry name" value="P-loop containing nucleotide triphosphate hydrolases"/>
    <property type="match status" value="1"/>
</dbReference>
<dbReference type="HAMAP" id="MF_01346">
    <property type="entry name" value="ATP_synth_alpha_bact"/>
    <property type="match status" value="1"/>
</dbReference>
<dbReference type="InterPro" id="IPR023366">
    <property type="entry name" value="ATP_synth_asu-like_sf"/>
</dbReference>
<dbReference type="InterPro" id="IPR000793">
    <property type="entry name" value="ATP_synth_asu_C"/>
</dbReference>
<dbReference type="InterPro" id="IPR038376">
    <property type="entry name" value="ATP_synth_asu_C_sf"/>
</dbReference>
<dbReference type="InterPro" id="IPR033732">
    <property type="entry name" value="ATP_synth_F1_a_nt-bd_dom"/>
</dbReference>
<dbReference type="InterPro" id="IPR005294">
    <property type="entry name" value="ATP_synth_F1_asu"/>
</dbReference>
<dbReference type="InterPro" id="IPR020003">
    <property type="entry name" value="ATPase_a/bsu_AS"/>
</dbReference>
<dbReference type="InterPro" id="IPR004100">
    <property type="entry name" value="ATPase_F1/V1/A1_a/bsu_N"/>
</dbReference>
<dbReference type="InterPro" id="IPR036121">
    <property type="entry name" value="ATPase_F1/V1/A1_a/bsu_N_sf"/>
</dbReference>
<dbReference type="InterPro" id="IPR000194">
    <property type="entry name" value="ATPase_F1/V1/A1_a/bsu_nucl-bd"/>
</dbReference>
<dbReference type="InterPro" id="IPR027417">
    <property type="entry name" value="P-loop_NTPase"/>
</dbReference>
<dbReference type="NCBIfam" id="TIGR00962">
    <property type="entry name" value="atpA"/>
    <property type="match status" value="1"/>
</dbReference>
<dbReference type="NCBIfam" id="NF009884">
    <property type="entry name" value="PRK13343.1"/>
    <property type="match status" value="1"/>
</dbReference>
<dbReference type="PANTHER" id="PTHR48082">
    <property type="entry name" value="ATP SYNTHASE SUBUNIT ALPHA, MITOCHONDRIAL"/>
    <property type="match status" value="1"/>
</dbReference>
<dbReference type="PANTHER" id="PTHR48082:SF2">
    <property type="entry name" value="ATP SYNTHASE SUBUNIT ALPHA, MITOCHONDRIAL"/>
    <property type="match status" value="1"/>
</dbReference>
<dbReference type="Pfam" id="PF00006">
    <property type="entry name" value="ATP-synt_ab"/>
    <property type="match status" value="1"/>
</dbReference>
<dbReference type="Pfam" id="PF00306">
    <property type="entry name" value="ATP-synt_ab_C"/>
    <property type="match status" value="1"/>
</dbReference>
<dbReference type="Pfam" id="PF02874">
    <property type="entry name" value="ATP-synt_ab_N"/>
    <property type="match status" value="1"/>
</dbReference>
<dbReference type="PIRSF" id="PIRSF039088">
    <property type="entry name" value="F_ATPase_subunit_alpha"/>
    <property type="match status" value="1"/>
</dbReference>
<dbReference type="SUPFAM" id="SSF47917">
    <property type="entry name" value="C-terminal domain of alpha and beta subunits of F1 ATP synthase"/>
    <property type="match status" value="1"/>
</dbReference>
<dbReference type="SUPFAM" id="SSF50615">
    <property type="entry name" value="N-terminal domain of alpha and beta subunits of F1 ATP synthase"/>
    <property type="match status" value="1"/>
</dbReference>
<dbReference type="SUPFAM" id="SSF52540">
    <property type="entry name" value="P-loop containing nucleoside triphosphate hydrolases"/>
    <property type="match status" value="1"/>
</dbReference>
<dbReference type="PROSITE" id="PS00152">
    <property type="entry name" value="ATPASE_ALPHA_BETA"/>
    <property type="match status" value="1"/>
</dbReference>
<proteinExistence type="inferred from homology"/>
<accession>A1K1S0</accession>
<reference key="1">
    <citation type="journal article" date="2006" name="Nat. Biotechnol.">
        <title>Complete genome of the mutualistic, N2-fixing grass endophyte Azoarcus sp. strain BH72.</title>
        <authorList>
            <person name="Krause A."/>
            <person name="Ramakumar A."/>
            <person name="Bartels D."/>
            <person name="Battistoni F."/>
            <person name="Bekel T."/>
            <person name="Boch J."/>
            <person name="Boehm M."/>
            <person name="Friedrich F."/>
            <person name="Hurek T."/>
            <person name="Krause L."/>
            <person name="Linke B."/>
            <person name="McHardy A.C."/>
            <person name="Sarkar A."/>
            <person name="Schneiker S."/>
            <person name="Syed A.A."/>
            <person name="Thauer R."/>
            <person name="Vorhoelter F.-J."/>
            <person name="Weidner S."/>
            <person name="Puehler A."/>
            <person name="Reinhold-Hurek B."/>
            <person name="Kaiser O."/>
            <person name="Goesmann A."/>
        </authorList>
    </citation>
    <scope>NUCLEOTIDE SEQUENCE [LARGE SCALE GENOMIC DNA]</scope>
    <source>
        <strain>BH72</strain>
    </source>
</reference>